<protein>
    <recommendedName>
        <fullName evidence="1">Translation initiation factor IF-3</fullName>
    </recommendedName>
</protein>
<gene>
    <name evidence="1" type="primary">infC</name>
    <name type="ordered locus">BDU_189</name>
</gene>
<keyword id="KW-0963">Cytoplasm</keyword>
<keyword id="KW-0396">Initiation factor</keyword>
<keyword id="KW-0648">Protein biosynthesis</keyword>
<name>IF3_BORDL</name>
<organism>
    <name type="scientific">Borrelia duttonii (strain Ly)</name>
    <dbReference type="NCBI Taxonomy" id="412419"/>
    <lineage>
        <taxon>Bacteria</taxon>
        <taxon>Pseudomonadati</taxon>
        <taxon>Spirochaetota</taxon>
        <taxon>Spirochaetia</taxon>
        <taxon>Spirochaetales</taxon>
        <taxon>Borreliaceae</taxon>
        <taxon>Borrelia</taxon>
    </lineage>
</organism>
<feature type="chain" id="PRO_1000092771" description="Translation initiation factor IF-3">
    <location>
        <begin position="1"/>
        <end position="186"/>
    </location>
</feature>
<feature type="region of interest" description="Disordered" evidence="2">
    <location>
        <begin position="1"/>
        <end position="20"/>
    </location>
</feature>
<comment type="function">
    <text evidence="1">IF-3 binds to the 30S ribosomal subunit and shifts the equilibrium between 70S ribosomes and their 50S and 30S subunits in favor of the free subunits, thus enhancing the availability of 30S subunits on which protein synthesis initiation begins.</text>
</comment>
<comment type="subunit">
    <text evidence="1">Monomer.</text>
</comment>
<comment type="subcellular location">
    <subcellularLocation>
        <location evidence="1">Cytoplasm</location>
    </subcellularLocation>
</comment>
<comment type="similarity">
    <text evidence="1">Belongs to the IF-3 family.</text>
</comment>
<evidence type="ECO:0000255" key="1">
    <source>
        <dbReference type="HAMAP-Rule" id="MF_00080"/>
    </source>
</evidence>
<evidence type="ECO:0000256" key="2">
    <source>
        <dbReference type="SAM" id="MobiDB-lite"/>
    </source>
</evidence>
<dbReference type="EMBL" id="CP000976">
    <property type="protein sequence ID" value="ACH93145.1"/>
    <property type="molecule type" value="Genomic_DNA"/>
</dbReference>
<dbReference type="RefSeq" id="WP_012537957.1">
    <property type="nucleotide sequence ID" value="NC_011229.1"/>
</dbReference>
<dbReference type="SMR" id="B5RL16"/>
<dbReference type="STRING" id="412419.BDU_189"/>
<dbReference type="KEGG" id="bdu:BDU_189"/>
<dbReference type="eggNOG" id="COG0290">
    <property type="taxonomic scope" value="Bacteria"/>
</dbReference>
<dbReference type="HOGENOM" id="CLU_054919_3_2_12"/>
<dbReference type="OrthoDB" id="9806014at2"/>
<dbReference type="Proteomes" id="UP000000611">
    <property type="component" value="Chromosome"/>
</dbReference>
<dbReference type="GO" id="GO:0005829">
    <property type="term" value="C:cytosol"/>
    <property type="evidence" value="ECO:0007669"/>
    <property type="project" value="TreeGrafter"/>
</dbReference>
<dbReference type="GO" id="GO:0016020">
    <property type="term" value="C:membrane"/>
    <property type="evidence" value="ECO:0007669"/>
    <property type="project" value="TreeGrafter"/>
</dbReference>
<dbReference type="GO" id="GO:0043022">
    <property type="term" value="F:ribosome binding"/>
    <property type="evidence" value="ECO:0007669"/>
    <property type="project" value="TreeGrafter"/>
</dbReference>
<dbReference type="GO" id="GO:0003743">
    <property type="term" value="F:translation initiation factor activity"/>
    <property type="evidence" value="ECO:0007669"/>
    <property type="project" value="UniProtKB-UniRule"/>
</dbReference>
<dbReference type="GO" id="GO:0032790">
    <property type="term" value="P:ribosome disassembly"/>
    <property type="evidence" value="ECO:0007669"/>
    <property type="project" value="TreeGrafter"/>
</dbReference>
<dbReference type="FunFam" id="3.10.20.80:FF:000001">
    <property type="entry name" value="Translation initiation factor IF-3"/>
    <property type="match status" value="1"/>
</dbReference>
<dbReference type="FunFam" id="3.30.110.10:FF:000001">
    <property type="entry name" value="Translation initiation factor IF-3"/>
    <property type="match status" value="1"/>
</dbReference>
<dbReference type="Gene3D" id="3.30.110.10">
    <property type="entry name" value="Translation initiation factor 3 (IF-3), C-terminal domain"/>
    <property type="match status" value="1"/>
</dbReference>
<dbReference type="Gene3D" id="3.10.20.80">
    <property type="entry name" value="Translation initiation factor 3 (IF-3), N-terminal domain"/>
    <property type="match status" value="1"/>
</dbReference>
<dbReference type="HAMAP" id="MF_00080">
    <property type="entry name" value="IF_3"/>
    <property type="match status" value="1"/>
</dbReference>
<dbReference type="InterPro" id="IPR036788">
    <property type="entry name" value="T_IF-3_C_sf"/>
</dbReference>
<dbReference type="InterPro" id="IPR036787">
    <property type="entry name" value="T_IF-3_N_sf"/>
</dbReference>
<dbReference type="InterPro" id="IPR019813">
    <property type="entry name" value="Translation_initiation_fac3_CS"/>
</dbReference>
<dbReference type="InterPro" id="IPR001288">
    <property type="entry name" value="Translation_initiation_fac_3"/>
</dbReference>
<dbReference type="InterPro" id="IPR019815">
    <property type="entry name" value="Translation_initiation_fac_3_C"/>
</dbReference>
<dbReference type="InterPro" id="IPR019814">
    <property type="entry name" value="Translation_initiation_fac_3_N"/>
</dbReference>
<dbReference type="NCBIfam" id="TIGR00168">
    <property type="entry name" value="infC"/>
    <property type="match status" value="1"/>
</dbReference>
<dbReference type="PANTHER" id="PTHR10938">
    <property type="entry name" value="TRANSLATION INITIATION FACTOR IF-3"/>
    <property type="match status" value="1"/>
</dbReference>
<dbReference type="PANTHER" id="PTHR10938:SF0">
    <property type="entry name" value="TRANSLATION INITIATION FACTOR IF-3, MITOCHONDRIAL"/>
    <property type="match status" value="1"/>
</dbReference>
<dbReference type="Pfam" id="PF00707">
    <property type="entry name" value="IF3_C"/>
    <property type="match status" value="1"/>
</dbReference>
<dbReference type="Pfam" id="PF05198">
    <property type="entry name" value="IF3_N"/>
    <property type="match status" value="1"/>
</dbReference>
<dbReference type="SUPFAM" id="SSF55200">
    <property type="entry name" value="Translation initiation factor IF3, C-terminal domain"/>
    <property type="match status" value="1"/>
</dbReference>
<dbReference type="SUPFAM" id="SSF54364">
    <property type="entry name" value="Translation initiation factor IF3, N-terminal domain"/>
    <property type="match status" value="1"/>
</dbReference>
<dbReference type="PROSITE" id="PS00938">
    <property type="entry name" value="IF3"/>
    <property type="match status" value="1"/>
</dbReference>
<reference key="1">
    <citation type="journal article" date="2008" name="PLoS Genet.">
        <title>The genome of Borrelia recurrentis, the agent of deadly louse-borne relapsing fever, is a degraded subset of tick-borne Borrelia duttonii.</title>
        <authorList>
            <person name="Lescot M."/>
            <person name="Audic S."/>
            <person name="Robert C."/>
            <person name="Nguyen T.T."/>
            <person name="Blanc G."/>
            <person name="Cutler S.J."/>
            <person name="Wincker P."/>
            <person name="Couloux A."/>
            <person name="Claverie J.-M."/>
            <person name="Raoult D."/>
            <person name="Drancourt M."/>
        </authorList>
    </citation>
    <scope>NUCLEOTIDE SEQUENCE [LARGE SCALE GENOMIC DNA]</scope>
    <source>
        <strain>Ly</strain>
    </source>
</reference>
<sequence length="186" mass="21640">MINRNSGKDRDRSRSGDKELRINHRIKAREVRVIFNDGTQSVLPIEDAIKCARDVELDLVEISPNALPPVCKIIDYGKYKFHQEKRQKEQRKNQKIIKLKEVRMQPKIDTHDLDFKYKNILGFLKEGNKVKVTIRFRGRELAHTHLGYGILESILERVGDSNYVLESPAKMEGKTMFLIIAPKSRK</sequence>
<accession>B5RL16</accession>
<proteinExistence type="inferred from homology"/>